<name>TRM13_SCHPO</name>
<reference key="1">
    <citation type="journal article" date="2002" name="Nature">
        <title>The genome sequence of Schizosaccharomyces pombe.</title>
        <authorList>
            <person name="Wood V."/>
            <person name="Gwilliam R."/>
            <person name="Rajandream M.A."/>
            <person name="Lyne M.H."/>
            <person name="Lyne R."/>
            <person name="Stewart A."/>
            <person name="Sgouros J.G."/>
            <person name="Peat N."/>
            <person name="Hayles J."/>
            <person name="Baker S.G."/>
            <person name="Basham D."/>
            <person name="Bowman S."/>
            <person name="Brooks K."/>
            <person name="Brown D."/>
            <person name="Brown S."/>
            <person name="Chillingworth T."/>
            <person name="Churcher C.M."/>
            <person name="Collins M."/>
            <person name="Connor R."/>
            <person name="Cronin A."/>
            <person name="Davis P."/>
            <person name="Feltwell T."/>
            <person name="Fraser A."/>
            <person name="Gentles S."/>
            <person name="Goble A."/>
            <person name="Hamlin N."/>
            <person name="Harris D.E."/>
            <person name="Hidalgo J."/>
            <person name="Hodgson G."/>
            <person name="Holroyd S."/>
            <person name="Hornsby T."/>
            <person name="Howarth S."/>
            <person name="Huckle E.J."/>
            <person name="Hunt S."/>
            <person name="Jagels K."/>
            <person name="James K.D."/>
            <person name="Jones L."/>
            <person name="Jones M."/>
            <person name="Leather S."/>
            <person name="McDonald S."/>
            <person name="McLean J."/>
            <person name="Mooney P."/>
            <person name="Moule S."/>
            <person name="Mungall K.L."/>
            <person name="Murphy L.D."/>
            <person name="Niblett D."/>
            <person name="Odell C."/>
            <person name="Oliver K."/>
            <person name="O'Neil S."/>
            <person name="Pearson D."/>
            <person name="Quail M.A."/>
            <person name="Rabbinowitsch E."/>
            <person name="Rutherford K.M."/>
            <person name="Rutter S."/>
            <person name="Saunders D."/>
            <person name="Seeger K."/>
            <person name="Sharp S."/>
            <person name="Skelton J."/>
            <person name="Simmonds M.N."/>
            <person name="Squares R."/>
            <person name="Squares S."/>
            <person name="Stevens K."/>
            <person name="Taylor K."/>
            <person name="Taylor R.G."/>
            <person name="Tivey A."/>
            <person name="Walsh S.V."/>
            <person name="Warren T."/>
            <person name="Whitehead S."/>
            <person name="Woodward J.R."/>
            <person name="Volckaert G."/>
            <person name="Aert R."/>
            <person name="Robben J."/>
            <person name="Grymonprez B."/>
            <person name="Weltjens I."/>
            <person name="Vanstreels E."/>
            <person name="Rieger M."/>
            <person name="Schaefer M."/>
            <person name="Mueller-Auer S."/>
            <person name="Gabel C."/>
            <person name="Fuchs M."/>
            <person name="Duesterhoeft A."/>
            <person name="Fritzc C."/>
            <person name="Holzer E."/>
            <person name="Moestl D."/>
            <person name="Hilbert H."/>
            <person name="Borzym K."/>
            <person name="Langer I."/>
            <person name="Beck A."/>
            <person name="Lehrach H."/>
            <person name="Reinhardt R."/>
            <person name="Pohl T.M."/>
            <person name="Eger P."/>
            <person name="Zimmermann W."/>
            <person name="Wedler H."/>
            <person name="Wambutt R."/>
            <person name="Purnelle B."/>
            <person name="Goffeau A."/>
            <person name="Cadieu E."/>
            <person name="Dreano S."/>
            <person name="Gloux S."/>
            <person name="Lelaure V."/>
            <person name="Mottier S."/>
            <person name="Galibert F."/>
            <person name="Aves S.J."/>
            <person name="Xiang Z."/>
            <person name="Hunt C."/>
            <person name="Moore K."/>
            <person name="Hurst S.M."/>
            <person name="Lucas M."/>
            <person name="Rochet M."/>
            <person name="Gaillardin C."/>
            <person name="Tallada V.A."/>
            <person name="Garzon A."/>
            <person name="Thode G."/>
            <person name="Daga R.R."/>
            <person name="Cruzado L."/>
            <person name="Jimenez J."/>
            <person name="Sanchez M."/>
            <person name="del Rey F."/>
            <person name="Benito J."/>
            <person name="Dominguez A."/>
            <person name="Revuelta J.L."/>
            <person name="Moreno S."/>
            <person name="Armstrong J."/>
            <person name="Forsburg S.L."/>
            <person name="Cerutti L."/>
            <person name="Lowe T."/>
            <person name="McCombie W.R."/>
            <person name="Paulsen I."/>
            <person name="Potashkin J."/>
            <person name="Shpakovski G.V."/>
            <person name="Ussery D."/>
            <person name="Barrell B.G."/>
            <person name="Nurse P."/>
        </authorList>
    </citation>
    <scope>NUCLEOTIDE SEQUENCE [LARGE SCALE GENOMIC DNA]</scope>
    <source>
        <strain>972 / ATCC 24843</strain>
    </source>
</reference>
<reference key="2">
    <citation type="journal article" date="2011" name="Science">
        <title>Comparative functional genomics of the fission yeasts.</title>
        <authorList>
            <person name="Rhind N."/>
            <person name="Chen Z."/>
            <person name="Yassour M."/>
            <person name="Thompson D.A."/>
            <person name="Haas B.J."/>
            <person name="Habib N."/>
            <person name="Wapinski I."/>
            <person name="Roy S."/>
            <person name="Lin M.F."/>
            <person name="Heiman D.I."/>
            <person name="Young S.K."/>
            <person name="Furuya K."/>
            <person name="Guo Y."/>
            <person name="Pidoux A."/>
            <person name="Chen H.M."/>
            <person name="Robbertse B."/>
            <person name="Goldberg J.M."/>
            <person name="Aoki K."/>
            <person name="Bayne E.H."/>
            <person name="Berlin A.M."/>
            <person name="Desjardins C.A."/>
            <person name="Dobbs E."/>
            <person name="Dukaj L."/>
            <person name="Fan L."/>
            <person name="FitzGerald M.G."/>
            <person name="French C."/>
            <person name="Gujja S."/>
            <person name="Hansen K."/>
            <person name="Keifenheim D."/>
            <person name="Levin J.Z."/>
            <person name="Mosher R.A."/>
            <person name="Mueller C.A."/>
            <person name="Pfiffner J."/>
            <person name="Priest M."/>
            <person name="Russ C."/>
            <person name="Smialowska A."/>
            <person name="Swoboda P."/>
            <person name="Sykes S.M."/>
            <person name="Vaughn M."/>
            <person name="Vengrova S."/>
            <person name="Yoder R."/>
            <person name="Zeng Q."/>
            <person name="Allshire R."/>
            <person name="Baulcombe D."/>
            <person name="Birren B.W."/>
            <person name="Brown W."/>
            <person name="Ekwall K."/>
            <person name="Kellis M."/>
            <person name="Leatherwood J."/>
            <person name="Levin H."/>
            <person name="Margalit H."/>
            <person name="Martienssen R."/>
            <person name="Nieduszynski C.A."/>
            <person name="Spatafora J.W."/>
            <person name="Friedman N."/>
            <person name="Dalgaard J.Z."/>
            <person name="Baumann P."/>
            <person name="Niki H."/>
            <person name="Regev A."/>
            <person name="Nusbaum C."/>
        </authorList>
    </citation>
    <scope>REVISION OF GENE MODEL</scope>
</reference>
<reference key="3">
    <citation type="journal article" date="2006" name="Nat. Biotechnol.">
        <title>ORFeome cloning and global analysis of protein localization in the fission yeast Schizosaccharomyces pombe.</title>
        <authorList>
            <person name="Matsuyama A."/>
            <person name="Arai R."/>
            <person name="Yashiroda Y."/>
            <person name="Shirai A."/>
            <person name="Kamata A."/>
            <person name="Sekido S."/>
            <person name="Kobayashi Y."/>
            <person name="Hashimoto A."/>
            <person name="Hamamoto M."/>
            <person name="Hiraoka Y."/>
            <person name="Horinouchi S."/>
            <person name="Yoshida M."/>
        </authorList>
    </citation>
    <scope>SUBCELLULAR LOCATION [LARGE SCALE ANALYSIS]</scope>
</reference>
<sequence length="368" mass="42666">MARIKKIFTQEELKQIPCPYDHKHTIVRHRLEYHLKRCNARPVERTDPYYKKDINISTSTDASESSSFEIVDLSKEELSKWICLFNRISDSLPTPQKKVLFHPAMNARLEEGTKKKHAIQQASLLGHMEKLHYFDNQGSIYYEFGAGRAELSRYVQHCSQQENVYILIDRDSNRTKHDSRILKDSIKNNWPEPKIIRCKIDIKDLKLDFFASEFRNSGKPVFAYSKHLCGAATDLTLNCLKSSPPNALVIALCCHHHCRWRTLSTFAREQLSHWGISNPQEFQILRQMTGWAVNSLREHMHASGGADSHISGLSHEERVKIGLKCKHIINYMRKLECEKMGYESSLVYYVGEETTLENVALIAYKRIN</sequence>
<feature type="chain" id="PRO_0000339427" description="tRNA:m(4)X modification enzyme TRM13">
    <location>
        <begin position="1"/>
        <end position="368"/>
    </location>
</feature>
<feature type="zinc finger region" description="CHHC U11-48K-type" evidence="2">
    <location>
        <begin position="15"/>
        <end position="42"/>
    </location>
</feature>
<feature type="binding site" evidence="2">
    <location>
        <position position="18"/>
    </location>
    <ligand>
        <name>Zn(2+)</name>
        <dbReference type="ChEBI" id="CHEBI:29105"/>
    </ligand>
</feature>
<feature type="binding site" evidence="2">
    <location>
        <position position="24"/>
    </location>
    <ligand>
        <name>Zn(2+)</name>
        <dbReference type="ChEBI" id="CHEBI:29105"/>
    </ligand>
</feature>
<feature type="binding site" evidence="2">
    <location>
        <position position="34"/>
    </location>
    <ligand>
        <name>Zn(2+)</name>
        <dbReference type="ChEBI" id="CHEBI:29105"/>
    </ligand>
</feature>
<feature type="binding site" evidence="2">
    <location>
        <position position="38"/>
    </location>
    <ligand>
        <name>Zn(2+)</name>
        <dbReference type="ChEBI" id="CHEBI:29105"/>
    </ligand>
</feature>
<keyword id="KW-0963">Cytoplasm</keyword>
<keyword id="KW-0479">Metal-binding</keyword>
<keyword id="KW-0489">Methyltransferase</keyword>
<keyword id="KW-0539">Nucleus</keyword>
<keyword id="KW-1185">Reference proteome</keyword>
<keyword id="KW-0949">S-adenosyl-L-methionine</keyword>
<keyword id="KW-0808">Transferase</keyword>
<keyword id="KW-0819">tRNA processing</keyword>
<keyword id="KW-0862">Zinc</keyword>
<keyword id="KW-0863">Zinc-finger</keyword>
<accession>Q9UTH1</accession>
<dbReference type="EC" id="2.1.1.225"/>
<dbReference type="EMBL" id="CU329670">
    <property type="protein sequence ID" value="CAB55844.2"/>
    <property type="molecule type" value="Genomic_DNA"/>
</dbReference>
<dbReference type="PIR" id="T37888">
    <property type="entry name" value="T37888"/>
</dbReference>
<dbReference type="RefSeq" id="NP_593914.2">
    <property type="nucleotide sequence ID" value="NM_001019343.2"/>
</dbReference>
<dbReference type="BioGRID" id="278862">
    <property type="interactions" value="42"/>
</dbReference>
<dbReference type="FunCoup" id="Q9UTH1">
    <property type="interactions" value="276"/>
</dbReference>
<dbReference type="STRING" id="284812.Q9UTH1"/>
<dbReference type="PaxDb" id="4896-SPAC1805.03c.1"/>
<dbReference type="EnsemblFungi" id="SPAC1805.03c.1">
    <property type="protein sequence ID" value="SPAC1805.03c.1:pep"/>
    <property type="gene ID" value="SPAC1805.03c"/>
</dbReference>
<dbReference type="GeneID" id="2542398"/>
<dbReference type="KEGG" id="spo:2542398"/>
<dbReference type="PomBase" id="SPAC1805.03c">
    <property type="gene designation" value="trm13"/>
</dbReference>
<dbReference type="VEuPathDB" id="FungiDB:SPAC1805.03c"/>
<dbReference type="eggNOG" id="KOG2811">
    <property type="taxonomic scope" value="Eukaryota"/>
</dbReference>
<dbReference type="HOGENOM" id="CLU_027610_0_0_1"/>
<dbReference type="InParanoid" id="Q9UTH1"/>
<dbReference type="OMA" id="HRCSWRS"/>
<dbReference type="PRO" id="PR:Q9UTH1"/>
<dbReference type="Proteomes" id="UP000002485">
    <property type="component" value="Chromosome I"/>
</dbReference>
<dbReference type="GO" id="GO:0005829">
    <property type="term" value="C:cytosol"/>
    <property type="evidence" value="ECO:0007005"/>
    <property type="project" value="PomBase"/>
</dbReference>
<dbReference type="GO" id="GO:0005730">
    <property type="term" value="C:nucleolus"/>
    <property type="evidence" value="ECO:0007005"/>
    <property type="project" value="PomBase"/>
</dbReference>
<dbReference type="GO" id="GO:0005634">
    <property type="term" value="C:nucleus"/>
    <property type="evidence" value="ECO:0007005"/>
    <property type="project" value="PomBase"/>
</dbReference>
<dbReference type="GO" id="GO:0106050">
    <property type="term" value="F:tRNA 2'-O-methyltransferase activity"/>
    <property type="evidence" value="ECO:0000266"/>
    <property type="project" value="PomBase"/>
</dbReference>
<dbReference type="GO" id="GO:0008175">
    <property type="term" value="F:tRNA methyltransferase activity"/>
    <property type="evidence" value="ECO:0000318"/>
    <property type="project" value="GO_Central"/>
</dbReference>
<dbReference type="GO" id="GO:0008270">
    <property type="term" value="F:zinc ion binding"/>
    <property type="evidence" value="ECO:0007669"/>
    <property type="project" value="UniProtKB-KW"/>
</dbReference>
<dbReference type="GO" id="GO:0030488">
    <property type="term" value="P:tRNA methylation"/>
    <property type="evidence" value="ECO:0000318"/>
    <property type="project" value="GO_Central"/>
</dbReference>
<dbReference type="InterPro" id="IPR007871">
    <property type="entry name" value="Methyltransferase_TRM13"/>
</dbReference>
<dbReference type="InterPro" id="IPR039044">
    <property type="entry name" value="Trm13"/>
</dbReference>
<dbReference type="InterPro" id="IPR022776">
    <property type="entry name" value="TRM13/UPF0224_CHHC_Znf_dom"/>
</dbReference>
<dbReference type="InterPro" id="IPR036236">
    <property type="entry name" value="Znf_C2H2_sf"/>
</dbReference>
<dbReference type="PANTHER" id="PTHR12998">
    <property type="entry name" value="TRNA:M(4)X MODIFICATION ENZYME TRM13 HOMOLOG"/>
    <property type="match status" value="1"/>
</dbReference>
<dbReference type="PANTHER" id="PTHR12998:SF0">
    <property type="entry name" value="TRNA:M(4)X MODIFICATION ENZYME TRM13 HOMOLOG"/>
    <property type="match status" value="1"/>
</dbReference>
<dbReference type="Pfam" id="PF05206">
    <property type="entry name" value="TRM13"/>
    <property type="match status" value="1"/>
</dbReference>
<dbReference type="Pfam" id="PF05253">
    <property type="entry name" value="zf-U11-48K"/>
    <property type="match status" value="1"/>
</dbReference>
<dbReference type="SUPFAM" id="SSF57667">
    <property type="entry name" value="beta-beta-alpha zinc fingers"/>
    <property type="match status" value="1"/>
</dbReference>
<dbReference type="PROSITE" id="PS51800">
    <property type="entry name" value="ZF_CHHC_U11_48K"/>
    <property type="match status" value="1"/>
</dbReference>
<proteinExistence type="inferred from homology"/>
<gene>
    <name type="primary">trm13</name>
    <name type="ORF">SPAC1805.03c</name>
</gene>
<comment type="function">
    <text evidence="1">tRNA methylase which 2'-O-methylates cytidine(4) in tRNA(Pro) and tRNA(Gly)(GCC), and adenosine(4) in tRNA(His).</text>
</comment>
<comment type="catalytic activity">
    <reaction evidence="1">
        <text>cytidine(4) in tRNA(Pro) + S-adenosyl-L-methionine = 2'-O-methylcytidine(4) in tRNA(Pro) + S-adenosyl-L-homocysteine + H(+)</text>
        <dbReference type="Rhea" id="RHEA:32767"/>
        <dbReference type="Rhea" id="RHEA-COMP:10397"/>
        <dbReference type="Rhea" id="RHEA-COMP:10398"/>
        <dbReference type="ChEBI" id="CHEBI:15378"/>
        <dbReference type="ChEBI" id="CHEBI:57856"/>
        <dbReference type="ChEBI" id="CHEBI:59789"/>
        <dbReference type="ChEBI" id="CHEBI:74495"/>
        <dbReference type="ChEBI" id="CHEBI:82748"/>
        <dbReference type="EC" id="2.1.1.225"/>
    </reaction>
</comment>
<comment type="catalytic activity">
    <reaction evidence="1">
        <text>cytidine(4) in tRNA(Gly)(GCC) + S-adenosyl-L-methionine = 2'-O-methylcytidine(4) in tRNA(Gly)(GCC) + S-adenosyl-L-homocysteine + H(+)</text>
        <dbReference type="Rhea" id="RHEA:43192"/>
        <dbReference type="Rhea" id="RHEA-COMP:10399"/>
        <dbReference type="Rhea" id="RHEA-COMP:10400"/>
        <dbReference type="ChEBI" id="CHEBI:15378"/>
        <dbReference type="ChEBI" id="CHEBI:57856"/>
        <dbReference type="ChEBI" id="CHEBI:59789"/>
        <dbReference type="ChEBI" id="CHEBI:74495"/>
        <dbReference type="ChEBI" id="CHEBI:82748"/>
        <dbReference type="EC" id="2.1.1.225"/>
    </reaction>
</comment>
<comment type="catalytic activity">
    <reaction evidence="1">
        <text>adenosine(4) in tRNA(His) + S-adenosyl-L-methionine = 2'-O-methyladenosine(4) in tRNA(His) + S-adenosyl-L-homocysteine + H(+)</text>
        <dbReference type="Rhea" id="RHEA:43196"/>
        <dbReference type="Rhea" id="RHEA-COMP:10401"/>
        <dbReference type="Rhea" id="RHEA-COMP:10402"/>
        <dbReference type="ChEBI" id="CHEBI:15378"/>
        <dbReference type="ChEBI" id="CHEBI:57856"/>
        <dbReference type="ChEBI" id="CHEBI:59789"/>
        <dbReference type="ChEBI" id="CHEBI:74411"/>
        <dbReference type="ChEBI" id="CHEBI:74477"/>
        <dbReference type="EC" id="2.1.1.225"/>
    </reaction>
</comment>
<comment type="subcellular location">
    <subcellularLocation>
        <location evidence="3">Cytoplasm</location>
    </subcellularLocation>
    <subcellularLocation>
        <location evidence="3">Nucleus</location>
        <location evidence="3">Nucleolus</location>
    </subcellularLocation>
</comment>
<comment type="similarity">
    <text evidence="4">Belongs to the methyltransferase TRM13 family.</text>
</comment>
<protein>
    <recommendedName>
        <fullName>tRNA:m(4)X modification enzyme TRM13</fullName>
        <ecNumber>2.1.1.225</ecNumber>
    </recommendedName>
    <alternativeName>
        <fullName>tRNA methylase 13</fullName>
    </alternativeName>
</protein>
<evidence type="ECO:0000250" key="1">
    <source>
        <dbReference type="UniProtKB" id="Q12383"/>
    </source>
</evidence>
<evidence type="ECO:0000255" key="2">
    <source>
        <dbReference type="PROSITE-ProRule" id="PRU01141"/>
    </source>
</evidence>
<evidence type="ECO:0000269" key="3">
    <source>
    </source>
</evidence>
<evidence type="ECO:0000305" key="4"/>
<organism>
    <name type="scientific">Schizosaccharomyces pombe (strain 972 / ATCC 24843)</name>
    <name type="common">Fission yeast</name>
    <dbReference type="NCBI Taxonomy" id="284812"/>
    <lineage>
        <taxon>Eukaryota</taxon>
        <taxon>Fungi</taxon>
        <taxon>Dikarya</taxon>
        <taxon>Ascomycota</taxon>
        <taxon>Taphrinomycotina</taxon>
        <taxon>Schizosaccharomycetes</taxon>
        <taxon>Schizosaccharomycetales</taxon>
        <taxon>Schizosaccharomycetaceae</taxon>
        <taxon>Schizosaccharomyces</taxon>
    </lineage>
</organism>